<feature type="chain" id="PRO_1000076920" description="Lipoprotein signal peptidase">
    <location>
        <begin position="1"/>
        <end position="163"/>
    </location>
</feature>
<feature type="transmembrane region" description="Helical" evidence="1">
    <location>
        <begin position="9"/>
        <end position="29"/>
    </location>
</feature>
<feature type="transmembrane region" description="Helical" evidence="1">
    <location>
        <begin position="42"/>
        <end position="62"/>
    </location>
</feature>
<feature type="transmembrane region" description="Helical" evidence="1">
    <location>
        <begin position="67"/>
        <end position="87"/>
    </location>
</feature>
<feature type="transmembrane region" description="Helical" evidence="1">
    <location>
        <begin position="93"/>
        <end position="113"/>
    </location>
</feature>
<feature type="transmembrane region" description="Helical" evidence="1">
    <location>
        <begin position="137"/>
        <end position="157"/>
    </location>
</feature>
<feature type="active site" evidence="1">
    <location>
        <position position="123"/>
    </location>
</feature>
<feature type="active site" evidence="1">
    <location>
        <position position="141"/>
    </location>
</feature>
<accession>A9KEI7</accession>
<comment type="function">
    <text evidence="1">This protein specifically catalyzes the removal of signal peptides from prolipoproteins.</text>
</comment>
<comment type="catalytic activity">
    <reaction evidence="1">
        <text>Release of signal peptides from bacterial membrane prolipoproteins. Hydrolyzes -Xaa-Yaa-Zaa-|-(S,diacylglyceryl)Cys-, in which Xaa is hydrophobic (preferably Leu), and Yaa (Ala or Ser) and Zaa (Gly or Ala) have small, neutral side chains.</text>
        <dbReference type="EC" id="3.4.23.36"/>
    </reaction>
</comment>
<comment type="pathway">
    <text evidence="1">Protein modification; lipoprotein biosynthesis (signal peptide cleavage).</text>
</comment>
<comment type="subcellular location">
    <subcellularLocation>
        <location evidence="1">Cell inner membrane</location>
        <topology evidence="1">Multi-pass membrane protein</topology>
    </subcellularLocation>
</comment>
<comment type="similarity">
    <text evidence="1">Belongs to the peptidase A8 family.</text>
</comment>
<comment type="sequence caution" evidence="2">
    <conflict type="erroneous initiation">
        <sequence resource="EMBL-CDS" id="ABS77217"/>
    </conflict>
</comment>
<dbReference type="EC" id="3.4.23.36" evidence="1"/>
<dbReference type="EMBL" id="CP000733">
    <property type="protein sequence ID" value="ABS77217.2"/>
    <property type="status" value="ALT_INIT"/>
    <property type="molecule type" value="Genomic_DNA"/>
</dbReference>
<dbReference type="RefSeq" id="WP_011997210.1">
    <property type="nucleotide sequence ID" value="NC_009727.1"/>
</dbReference>
<dbReference type="SMR" id="A9KEI7"/>
<dbReference type="KEGG" id="cbd:CBUD_1671"/>
<dbReference type="HOGENOM" id="CLU_083252_4_0_6"/>
<dbReference type="UniPathway" id="UPA00665"/>
<dbReference type="Proteomes" id="UP000008555">
    <property type="component" value="Chromosome"/>
</dbReference>
<dbReference type="GO" id="GO:0005886">
    <property type="term" value="C:plasma membrane"/>
    <property type="evidence" value="ECO:0007669"/>
    <property type="project" value="UniProtKB-SubCell"/>
</dbReference>
<dbReference type="GO" id="GO:0004190">
    <property type="term" value="F:aspartic-type endopeptidase activity"/>
    <property type="evidence" value="ECO:0007669"/>
    <property type="project" value="UniProtKB-UniRule"/>
</dbReference>
<dbReference type="GO" id="GO:0006508">
    <property type="term" value="P:proteolysis"/>
    <property type="evidence" value="ECO:0007669"/>
    <property type="project" value="UniProtKB-KW"/>
</dbReference>
<dbReference type="HAMAP" id="MF_00161">
    <property type="entry name" value="LspA"/>
    <property type="match status" value="1"/>
</dbReference>
<dbReference type="InterPro" id="IPR001872">
    <property type="entry name" value="Peptidase_A8"/>
</dbReference>
<dbReference type="NCBIfam" id="TIGR00077">
    <property type="entry name" value="lspA"/>
    <property type="match status" value="1"/>
</dbReference>
<dbReference type="PANTHER" id="PTHR33695">
    <property type="entry name" value="LIPOPROTEIN SIGNAL PEPTIDASE"/>
    <property type="match status" value="1"/>
</dbReference>
<dbReference type="PANTHER" id="PTHR33695:SF1">
    <property type="entry name" value="LIPOPROTEIN SIGNAL PEPTIDASE"/>
    <property type="match status" value="1"/>
</dbReference>
<dbReference type="Pfam" id="PF01252">
    <property type="entry name" value="Peptidase_A8"/>
    <property type="match status" value="1"/>
</dbReference>
<dbReference type="PRINTS" id="PR00781">
    <property type="entry name" value="LIPOSIGPTASE"/>
</dbReference>
<dbReference type="PROSITE" id="PS00855">
    <property type="entry name" value="SPASE_II"/>
    <property type="match status" value="1"/>
</dbReference>
<sequence length="163" mass="18541">MVTKKSKKAWPWLWLSVLVILLDQLSKYLANHFLSLGHPVKILPFLNFTLNYNTGAAFSFLGTENGWQIIFFAAISFVVSIFLILWLSRTSRSEIMMSLGLSLIIGGALGNFIDRLRWSYVTDFIDFHIKDWHFATFNVADSAICVGVFLLIVYMLLTPSSKP</sequence>
<gene>
    <name evidence="1" type="primary">lspA</name>
    <name type="ordered locus">CBUD_1671</name>
</gene>
<name>LSPA_COXBN</name>
<keyword id="KW-0064">Aspartyl protease</keyword>
<keyword id="KW-0997">Cell inner membrane</keyword>
<keyword id="KW-1003">Cell membrane</keyword>
<keyword id="KW-0378">Hydrolase</keyword>
<keyword id="KW-0472">Membrane</keyword>
<keyword id="KW-0645">Protease</keyword>
<keyword id="KW-0812">Transmembrane</keyword>
<keyword id="KW-1133">Transmembrane helix</keyword>
<organism>
    <name type="scientific">Coxiella burnetii (strain Dugway 5J108-111)</name>
    <dbReference type="NCBI Taxonomy" id="434922"/>
    <lineage>
        <taxon>Bacteria</taxon>
        <taxon>Pseudomonadati</taxon>
        <taxon>Pseudomonadota</taxon>
        <taxon>Gammaproteobacteria</taxon>
        <taxon>Legionellales</taxon>
        <taxon>Coxiellaceae</taxon>
        <taxon>Coxiella</taxon>
    </lineage>
</organism>
<evidence type="ECO:0000255" key="1">
    <source>
        <dbReference type="HAMAP-Rule" id="MF_00161"/>
    </source>
</evidence>
<evidence type="ECO:0000305" key="2"/>
<reference key="1">
    <citation type="journal article" date="2009" name="Infect. Immun.">
        <title>Comparative genomics reveal extensive transposon-mediated genomic plasticity and diversity among potential effector proteins within the genus Coxiella.</title>
        <authorList>
            <person name="Beare P.A."/>
            <person name="Unsworth N."/>
            <person name="Andoh M."/>
            <person name="Voth D.E."/>
            <person name="Omsland A."/>
            <person name="Gilk S.D."/>
            <person name="Williams K.P."/>
            <person name="Sobral B.W."/>
            <person name="Kupko J.J. III"/>
            <person name="Porcella S.F."/>
            <person name="Samuel J.E."/>
            <person name="Heinzen R.A."/>
        </authorList>
    </citation>
    <scope>NUCLEOTIDE SEQUENCE [LARGE SCALE GENOMIC DNA]</scope>
    <source>
        <strain>Dugway 5J108-111</strain>
    </source>
</reference>
<protein>
    <recommendedName>
        <fullName evidence="1">Lipoprotein signal peptidase</fullName>
        <ecNumber evidence="1">3.4.23.36</ecNumber>
    </recommendedName>
    <alternativeName>
        <fullName evidence="1">Prolipoprotein signal peptidase</fullName>
    </alternativeName>
    <alternativeName>
        <fullName evidence="1">Signal peptidase II</fullName>
        <shortName evidence="1">SPase II</shortName>
    </alternativeName>
</protein>
<proteinExistence type="inferred from homology"/>